<gene>
    <name type="primary">she9</name>
    <name type="ORF">An14g04090</name>
</gene>
<keyword id="KW-0175">Coiled coil</keyword>
<keyword id="KW-0472">Membrane</keyword>
<keyword id="KW-0496">Mitochondrion</keyword>
<keyword id="KW-0999">Mitochondrion inner membrane</keyword>
<keyword id="KW-1185">Reference proteome</keyword>
<keyword id="KW-0809">Transit peptide</keyword>
<keyword id="KW-0812">Transmembrane</keyword>
<keyword id="KW-1133">Transmembrane helix</keyword>
<feature type="transit peptide" description="Mitochondrion" evidence="2">
    <location>
        <begin position="1"/>
        <end status="unknown"/>
    </location>
</feature>
<feature type="chain" id="PRO_0000351049" description="Sensitive to high expression protein 9 homolog, mitochondrial">
    <location>
        <begin status="unknown"/>
        <end position="499"/>
    </location>
</feature>
<feature type="topological domain" description="Mitochondrial matrix" evidence="2">
    <location>
        <begin status="unknown"/>
        <end position="302"/>
    </location>
</feature>
<feature type="transmembrane region" description="Helical" evidence="2">
    <location>
        <begin position="303"/>
        <end position="323"/>
    </location>
</feature>
<feature type="topological domain" description="Mitochondrial intermembrane" evidence="2">
    <location>
        <begin position="324"/>
        <end position="475"/>
    </location>
</feature>
<feature type="transmembrane region" description="Helical" evidence="2">
    <location>
        <begin position="476"/>
        <end position="496"/>
    </location>
</feature>
<feature type="topological domain" description="Mitochondrial matrix" evidence="2">
    <location>
        <begin position="497"/>
        <end position="499"/>
    </location>
</feature>
<feature type="region of interest" description="Disordered" evidence="3">
    <location>
        <begin position="94"/>
        <end position="144"/>
    </location>
</feature>
<feature type="region of interest" description="Disordered" evidence="3">
    <location>
        <begin position="360"/>
        <end position="396"/>
    </location>
</feature>
<feature type="region of interest" description="Disordered" evidence="3">
    <location>
        <begin position="410"/>
        <end position="431"/>
    </location>
</feature>
<feature type="coiled-coil region" evidence="2">
    <location>
        <begin position="181"/>
        <end position="283"/>
    </location>
</feature>
<feature type="compositionally biased region" description="Low complexity" evidence="3">
    <location>
        <begin position="96"/>
        <end position="125"/>
    </location>
</feature>
<feature type="compositionally biased region" description="Low complexity" evidence="3">
    <location>
        <begin position="364"/>
        <end position="392"/>
    </location>
</feature>
<organism>
    <name type="scientific">Aspergillus niger (strain ATCC MYA-4892 / CBS 513.88 / FGSC A1513)</name>
    <dbReference type="NCBI Taxonomy" id="425011"/>
    <lineage>
        <taxon>Eukaryota</taxon>
        <taxon>Fungi</taxon>
        <taxon>Dikarya</taxon>
        <taxon>Ascomycota</taxon>
        <taxon>Pezizomycotina</taxon>
        <taxon>Eurotiomycetes</taxon>
        <taxon>Eurotiomycetidae</taxon>
        <taxon>Eurotiales</taxon>
        <taxon>Aspergillaceae</taxon>
        <taxon>Aspergillus</taxon>
        <taxon>Aspergillus subgen. Circumdati</taxon>
    </lineage>
</organism>
<accession>A2R3F3</accession>
<proteinExistence type="inferred from homology"/>
<sequence length="499" mass="55681">MQSMPLLLRQSFKSTLNLTRTTRPVQRRPLLPAVGPNSLYPAPRNFSICLQCQFRTQSSLYSSDSLKDGKPAEQPKEDASPVIALPAGNANLEADAGSQQQAPPAAAEAGESTQSQQQQQQQQQQQEEKSEANGKGWGDGGLPSYIEQRRSQFTKRFSDVMDNLQSNIFVAGQRLNDLTGYSAIEMLKKEIHRQEERLRTARLQVRTAKDAYAAAINNRSTSQREVNELLQRKHAWSPTDLERFTHLYRNDHTNEVAEHEAQEALSQAEHEAEEAAAQLSKSILSRYHEEQVWSDKIRQMSTWGTWGLMGVNVLLFLIFQIAVEPWRRKRLVKGFEEKVIEAIEKEKALDRIQIVTAQNQMAQESSTTSTASTATPETAETAETAEPSASPADEPIADTDAIVTIESTEPEVFSSDPADAEPPANTIVSKPTPDNIREYIKFQLARVSPLLESLRQYLHDLFSDRQVVLTQRDLSTVALQSAAAGAAVIGMLSMIIRQR</sequence>
<evidence type="ECO:0000250" key="1"/>
<evidence type="ECO:0000255" key="2"/>
<evidence type="ECO:0000256" key="3">
    <source>
        <dbReference type="SAM" id="MobiDB-lite"/>
    </source>
</evidence>
<evidence type="ECO:0000305" key="4"/>
<reference key="1">
    <citation type="journal article" date="2007" name="Nat. Biotechnol.">
        <title>Genome sequencing and analysis of the versatile cell factory Aspergillus niger CBS 513.88.</title>
        <authorList>
            <person name="Pel H.J."/>
            <person name="de Winde J.H."/>
            <person name="Archer D.B."/>
            <person name="Dyer P.S."/>
            <person name="Hofmann G."/>
            <person name="Schaap P.J."/>
            <person name="Turner G."/>
            <person name="de Vries R.P."/>
            <person name="Albang R."/>
            <person name="Albermann K."/>
            <person name="Andersen M.R."/>
            <person name="Bendtsen J.D."/>
            <person name="Benen J.A.E."/>
            <person name="van den Berg M."/>
            <person name="Breestraat S."/>
            <person name="Caddick M.X."/>
            <person name="Contreras R."/>
            <person name="Cornell M."/>
            <person name="Coutinho P.M."/>
            <person name="Danchin E.G.J."/>
            <person name="Debets A.J.M."/>
            <person name="Dekker P."/>
            <person name="van Dijck P.W.M."/>
            <person name="van Dijk A."/>
            <person name="Dijkhuizen L."/>
            <person name="Driessen A.J.M."/>
            <person name="d'Enfert C."/>
            <person name="Geysens S."/>
            <person name="Goosen C."/>
            <person name="Groot G.S.P."/>
            <person name="de Groot P.W.J."/>
            <person name="Guillemette T."/>
            <person name="Henrissat B."/>
            <person name="Herweijer M."/>
            <person name="van den Hombergh J.P.T.W."/>
            <person name="van den Hondel C.A.M.J.J."/>
            <person name="van der Heijden R.T.J.M."/>
            <person name="van der Kaaij R.M."/>
            <person name="Klis F.M."/>
            <person name="Kools H.J."/>
            <person name="Kubicek C.P."/>
            <person name="van Kuyk P.A."/>
            <person name="Lauber J."/>
            <person name="Lu X."/>
            <person name="van der Maarel M.J.E.C."/>
            <person name="Meulenberg R."/>
            <person name="Menke H."/>
            <person name="Mortimer M.A."/>
            <person name="Nielsen J."/>
            <person name="Oliver S.G."/>
            <person name="Olsthoorn M."/>
            <person name="Pal K."/>
            <person name="van Peij N.N.M.E."/>
            <person name="Ram A.F.J."/>
            <person name="Rinas U."/>
            <person name="Roubos J.A."/>
            <person name="Sagt C.M.J."/>
            <person name="Schmoll M."/>
            <person name="Sun J."/>
            <person name="Ussery D."/>
            <person name="Varga J."/>
            <person name="Vervecken W."/>
            <person name="van de Vondervoort P.J.J."/>
            <person name="Wedler H."/>
            <person name="Woesten H.A.B."/>
            <person name="Zeng A.-P."/>
            <person name="van Ooyen A.J.J."/>
            <person name="Visser J."/>
            <person name="Stam H."/>
        </authorList>
    </citation>
    <scope>NUCLEOTIDE SEQUENCE [LARGE SCALE GENOMIC DNA]</scope>
    <source>
        <strain>ATCC MYA-4892 / CBS 513.88 / FGSC A1513</strain>
    </source>
</reference>
<dbReference type="EMBL" id="AM270320">
    <property type="protein sequence ID" value="CAK46645.1"/>
    <property type="molecule type" value="Genomic_DNA"/>
</dbReference>
<dbReference type="RefSeq" id="XP_001401033.1">
    <property type="nucleotide sequence ID" value="XM_001400996.2"/>
</dbReference>
<dbReference type="SMR" id="A2R3F3"/>
<dbReference type="EnsemblFungi" id="CAK46645">
    <property type="protein sequence ID" value="CAK46645"/>
    <property type="gene ID" value="An14g04090"/>
</dbReference>
<dbReference type="GeneID" id="4987266"/>
<dbReference type="KEGG" id="ang:An14g04090"/>
<dbReference type="VEuPathDB" id="FungiDB:An14g04090"/>
<dbReference type="HOGENOM" id="CLU_025632_2_0_1"/>
<dbReference type="Proteomes" id="UP000006706">
    <property type="component" value="Chromosome 1R"/>
</dbReference>
<dbReference type="GO" id="GO:0005743">
    <property type="term" value="C:mitochondrial inner membrane"/>
    <property type="evidence" value="ECO:0007669"/>
    <property type="project" value="UniProtKB-SubCell"/>
</dbReference>
<dbReference type="GO" id="GO:0007007">
    <property type="term" value="P:inner mitochondrial membrane organization"/>
    <property type="evidence" value="ECO:0007669"/>
    <property type="project" value="TreeGrafter"/>
</dbReference>
<dbReference type="InterPro" id="IPR008839">
    <property type="entry name" value="MDM33_fungi"/>
</dbReference>
<dbReference type="PANTHER" id="PTHR31961">
    <property type="entry name" value="SENSITIVE TO HIGH EXPRESSION PROTEIN 9, MITOCHONDRIAL"/>
    <property type="match status" value="1"/>
</dbReference>
<dbReference type="PANTHER" id="PTHR31961:SF3">
    <property type="entry name" value="SENSITIVE TO HIGH EXPRESSION PROTEIN 9, MITOCHONDRIAL"/>
    <property type="match status" value="1"/>
</dbReference>
<dbReference type="Pfam" id="PF05546">
    <property type="entry name" value="She9_MDM33"/>
    <property type="match status" value="1"/>
</dbReference>
<name>SHE9_ASPNC</name>
<comment type="function">
    <text evidence="1">Required for the maintenance of the structure of the mitochondrial inner membrane. Involved in mitochondrial morphology. Causes growth arrest when highly overexpressed (By similarity).</text>
</comment>
<comment type="subunit">
    <text evidence="1">Homooligomer.</text>
</comment>
<comment type="subcellular location">
    <subcellularLocation>
        <location evidence="1">Mitochondrion inner membrane</location>
        <topology evidence="1">Multi-pass membrane protein</topology>
    </subcellularLocation>
</comment>
<comment type="similarity">
    <text evidence="4">Belongs to the SHE9 family.</text>
</comment>
<protein>
    <recommendedName>
        <fullName>Sensitive to high expression protein 9 homolog, mitochondrial</fullName>
    </recommendedName>
</protein>